<name>MTD1_CAEEL</name>
<gene>
    <name evidence="4 8" type="primary">mtd-1</name>
    <name evidence="8" type="ORF">ZK337.5</name>
</gene>
<accession>G5ECI1</accession>
<reference evidence="7" key="1">
    <citation type="journal article" date="1998" name="Science">
        <title>Genome sequence of the nematode C. elegans: a platform for investigating biology.</title>
        <authorList>
            <consortium name="The C. elegans sequencing consortium"/>
        </authorList>
    </citation>
    <scope>NUCLEOTIDE SEQUENCE [LARGE SCALE GENOMIC DNA]</scope>
    <source>
        <strain evidence="7">Bristol N2</strain>
    </source>
</reference>
<reference evidence="5" key="2">
    <citation type="journal article" date="2002" name="Mech. Dev.">
        <title>MTD-1, a touch-cell-specific membrane protein with a subtle effect on touch sensitivity.</title>
        <authorList>
            <person name="Zhang Y."/>
            <person name="Chalfie M."/>
        </authorList>
    </citation>
    <scope>FUNCTION</scope>
    <scope>SUBCELLULAR LOCATION</scope>
    <scope>DEVELOPMENTAL STAGE</scope>
    <scope>DISRUPTION PHENOTYPE</scope>
</reference>
<dbReference type="EMBL" id="BX284601">
    <property type="protein sequence ID" value="CAB51468.1"/>
    <property type="molecule type" value="Genomic_DNA"/>
</dbReference>
<dbReference type="PIR" id="T21718">
    <property type="entry name" value="T21718"/>
</dbReference>
<dbReference type="RefSeq" id="NP_493615.1">
    <property type="nucleotide sequence ID" value="NM_061214.9"/>
</dbReference>
<dbReference type="FunCoup" id="G5ECI1">
    <property type="interactions" value="205"/>
</dbReference>
<dbReference type="STRING" id="6239.ZK337.5.1"/>
<dbReference type="GlyCosmos" id="G5ECI1">
    <property type="glycosylation" value="4 sites, No reported glycans"/>
</dbReference>
<dbReference type="PaxDb" id="6239-ZK337.5"/>
<dbReference type="PeptideAtlas" id="G5ECI1"/>
<dbReference type="EnsemblMetazoa" id="ZK337.5.1">
    <property type="protein sequence ID" value="ZK337.5.1"/>
    <property type="gene ID" value="WBGene00003471"/>
</dbReference>
<dbReference type="GeneID" id="191285"/>
<dbReference type="KEGG" id="cel:CELE_ZK337.5"/>
<dbReference type="AGR" id="WB:WBGene00003471"/>
<dbReference type="CTD" id="191285"/>
<dbReference type="WormBase" id="ZK337.5">
    <property type="protein sequence ID" value="CE24721"/>
    <property type="gene ID" value="WBGene00003471"/>
    <property type="gene designation" value="mtd-1"/>
</dbReference>
<dbReference type="eggNOG" id="ENOG502TGU6">
    <property type="taxonomic scope" value="Eukaryota"/>
</dbReference>
<dbReference type="HOGENOM" id="CLU_991237_0_0_1"/>
<dbReference type="InParanoid" id="G5ECI1"/>
<dbReference type="OMA" id="CQGHNIW"/>
<dbReference type="OrthoDB" id="5872406at2759"/>
<dbReference type="PRO" id="PR:G5ECI1"/>
<dbReference type="Proteomes" id="UP000001940">
    <property type="component" value="Chromosome I"/>
</dbReference>
<dbReference type="Bgee" id="WBGene00003471">
    <property type="expression patterns" value="Expressed in larva and 2 other cell types or tissues"/>
</dbReference>
<dbReference type="GO" id="GO:0005886">
    <property type="term" value="C:plasma membrane"/>
    <property type="evidence" value="ECO:0000314"/>
    <property type="project" value="UniProtKB"/>
</dbReference>
<dbReference type="GO" id="GO:1905789">
    <property type="term" value="P:positive regulation of detection of mechanical stimulus involved in sensory perception of touch"/>
    <property type="evidence" value="ECO:0000316"/>
    <property type="project" value="UniProtKB"/>
</dbReference>
<feature type="signal peptide" evidence="1">
    <location>
        <begin position="1"/>
        <end position="17"/>
    </location>
</feature>
<feature type="chain" id="PRO_5003475913" description="Protein mtd-1">
    <location>
        <begin position="18"/>
        <end position="278"/>
    </location>
</feature>
<feature type="topological domain" description="Extracellular" evidence="5">
    <location>
        <begin position="18"/>
        <end position="254"/>
    </location>
</feature>
<feature type="transmembrane region" description="Helical" evidence="1">
    <location>
        <begin position="255"/>
        <end position="271"/>
    </location>
</feature>
<feature type="topological domain" description="Cytoplasmic" evidence="5">
    <location>
        <begin position="272"/>
        <end position="278"/>
    </location>
</feature>
<feature type="glycosylation site" description="N-linked (GlcNAc...) asparagine" evidence="2">
    <location>
        <position position="40"/>
    </location>
</feature>
<feature type="glycosylation site" description="N-linked (GlcNAc...) asparagine" evidence="2">
    <location>
        <position position="73"/>
    </location>
</feature>
<feature type="glycosylation site" description="N-linked (GlcNAc...) asparagine" evidence="2">
    <location>
        <position position="163"/>
    </location>
</feature>
<feature type="glycosylation site" description="N-linked (GlcNAc...) asparagine" evidence="2">
    <location>
        <position position="190"/>
    </location>
</feature>
<evidence type="ECO:0000255" key="1"/>
<evidence type="ECO:0000255" key="2">
    <source>
        <dbReference type="PROSITE-ProRule" id="PRU00498"/>
    </source>
</evidence>
<evidence type="ECO:0000269" key="3">
    <source>
    </source>
</evidence>
<evidence type="ECO:0000303" key="4">
    <source>
    </source>
</evidence>
<evidence type="ECO:0000305" key="5"/>
<evidence type="ECO:0000305" key="6">
    <source>
    </source>
</evidence>
<evidence type="ECO:0000312" key="7">
    <source>
        <dbReference type="Proteomes" id="UP000001940"/>
    </source>
</evidence>
<evidence type="ECO:0000312" key="8">
    <source>
        <dbReference type="WormBase" id="ZK337.5"/>
    </source>
</evidence>
<comment type="function">
    <text evidence="3">Plays a role in mechanosensory transduction (touch sensitivity).</text>
</comment>
<comment type="subcellular location">
    <subcellularLocation>
        <location evidence="3">Cell membrane</location>
        <topology evidence="1">Single-pass type I membrane protein</topology>
        <orientation evidence="6">Extracellular side</orientation>
    </subcellularLocation>
</comment>
<comment type="developmental stage">
    <text evidence="3">Expressed in embryos and larva (PubMed:12385749). In L2 and L3 stage larva, expressed in the six touch receptor neurons (PubMed:12385749).</text>
</comment>
<comment type="disruption phenotype">
    <text evidence="3">RNAi-mediated knockdown results in no visible phenotype (PubMed:12385749). RNAi-mediated knockdown enhances the touch-insensitive phenotype (the inability to respond to more than two of four touches) of mec-6 u247ts mutants at 15 degrees Celsius (PubMed:12385749).</text>
</comment>
<organism evidence="7">
    <name type="scientific">Caenorhabditis elegans</name>
    <dbReference type="NCBI Taxonomy" id="6239"/>
    <lineage>
        <taxon>Eukaryota</taxon>
        <taxon>Metazoa</taxon>
        <taxon>Ecdysozoa</taxon>
        <taxon>Nematoda</taxon>
        <taxon>Chromadorea</taxon>
        <taxon>Rhabditida</taxon>
        <taxon>Rhabditina</taxon>
        <taxon>Rhabditomorpha</taxon>
        <taxon>Rhabditoidea</taxon>
        <taxon>Rhabditidae</taxon>
        <taxon>Peloderinae</taxon>
        <taxon>Caenorhabditis</taxon>
    </lineage>
</organism>
<keyword id="KW-1003">Cell membrane</keyword>
<keyword id="KW-0325">Glycoprotein</keyword>
<keyword id="KW-0472">Membrane</keyword>
<keyword id="KW-1185">Reference proteome</keyword>
<keyword id="KW-0732">Signal</keyword>
<keyword id="KW-0812">Transmembrane</keyword>
<keyword id="KW-1133">Transmembrane helix</keyword>
<sequence>MRSSLLLLVFFLSIGWARYCVHNEKSWCQGHNIWGWCFHNKSSGVFNCDDNAFCVSQEQLKNKKSSGCFLRDNSSICCCNDADGCNLGFIGVQPKYAHGQQCTNSMEVPNEDIRQFRPCDDPFCYSVLTAEDDGGPTTVTRGCHSRKMVMHHMSKNEDDKYQNNTKWRETKQIAEMPSCAEILKDQPKVNGTTSMCVDFTYDQEAEDGEEVDEPIKMKGRLCCCAGSNKCNEHAMWADEGISLTEMLEEIEARKVPVDSSAPVNIILSIAFSIFLIHF</sequence>
<proteinExistence type="evidence at transcript level"/>
<protein>
    <recommendedName>
        <fullName evidence="5">Protein mtd-1</fullName>
    </recommendedName>
    <alternativeName>
        <fullName evidence="4 8">Mec three-dependent expression protein 1</fullName>
    </alternativeName>
</protein>